<gene>
    <name evidence="1" type="primary">aspS</name>
    <name type="ordered locus">ML0501</name>
    <name type="ORF">MLCB1259.19</name>
</gene>
<proteinExistence type="inferred from homology"/>
<name>SYDND_MYCLE</name>
<sequence length="589" mass="64631">MLRSHGAGVLRKSDAGQQVTLAGWVSRRRDHGGVIFIDLRDSSGITQAVFREPDVLAQAHRLRAEFCIAVSGVVEIRPEGNANAEIPTGDIEVNATSLTVLGESAPLPFQLDEPAGEELRLKYRYLDLRRDGPGSAIRLRSKVNATARAVLARHDFVEIETPTITRSTPEGARDFLVPARLRPGTFYALPQSPQLFKQLLMVAGMERYYQIAHCYRDEDFRADRQPEFTQLDMEMSFVDAEDVIAISEEILTELWMLIGYHIPAPIPRISYADAMRRFGSDKPDLRFGLELVECTEFFCDTTFRVFQAPYVGAVVMPGGAAQPRRTLDEWQDWAKQRGHRGLAYVLVTDDGTLGGPVAKNFSDAERSRLASHVGAEPGDCIFFSAGPAKSSRALLGAARGEIANRLGLIDPEAWAFVWVVDPPLFERADEATKVGEMAVGSGAWTAVHHAFTSPKPEFEDSIESDPGSVLADAYDIVCNGHEIGSGSVRINRRDIQERVFAVMGLEKAEAEEKFGFLLEAFTFGAPPHGGIAFGWDRTNALLAGMESIREVIAFPKTGGGVDPLTDAPASITAQQRKESGIDTKPKEVE</sequence>
<accession>P36429</accession>
<accession>P95671</accession>
<protein>
    <recommendedName>
        <fullName evidence="1">Aspartate--tRNA(Asp/Asn) ligase</fullName>
        <ecNumber evidence="1">6.1.1.23</ecNumber>
    </recommendedName>
    <alternativeName>
        <fullName evidence="1">Aspartyl-tRNA synthetase</fullName>
        <shortName evidence="1">AspRS</shortName>
    </alternativeName>
    <alternativeName>
        <fullName evidence="1">Non-discriminating aspartyl-tRNA synthetase</fullName>
        <shortName evidence="1">ND-AspRS</shortName>
    </alternativeName>
</protein>
<evidence type="ECO:0000255" key="1">
    <source>
        <dbReference type="HAMAP-Rule" id="MF_00044"/>
    </source>
</evidence>
<evidence type="ECO:0000256" key="2">
    <source>
        <dbReference type="SAM" id="MobiDB-lite"/>
    </source>
</evidence>
<dbReference type="EC" id="6.1.1.23" evidence="1"/>
<dbReference type="EMBL" id="X77655">
    <property type="protein sequence ID" value="CAA54735.1"/>
    <property type="molecule type" value="Genomic_DNA"/>
</dbReference>
<dbReference type="EMBL" id="S82268">
    <property type="protein sequence ID" value="AAC27132.1"/>
    <property type="molecule type" value="Genomic_DNA"/>
</dbReference>
<dbReference type="EMBL" id="AL023591">
    <property type="protein sequence ID" value="CAA19094.1"/>
    <property type="molecule type" value="Genomic_DNA"/>
</dbReference>
<dbReference type="EMBL" id="AL583918">
    <property type="protein sequence ID" value="CAC30009.1"/>
    <property type="molecule type" value="Genomic_DNA"/>
</dbReference>
<dbReference type="PIR" id="S42047">
    <property type="entry name" value="S42047"/>
</dbReference>
<dbReference type="RefSeq" id="NP_301434.1">
    <property type="nucleotide sequence ID" value="NC_002677.1"/>
</dbReference>
<dbReference type="SMR" id="P36429"/>
<dbReference type="STRING" id="272631.gene:17574322"/>
<dbReference type="KEGG" id="mle:ML0501"/>
<dbReference type="PATRIC" id="fig|272631.5.peg.878"/>
<dbReference type="Leproma" id="ML0501"/>
<dbReference type="eggNOG" id="COG0173">
    <property type="taxonomic scope" value="Bacteria"/>
</dbReference>
<dbReference type="HOGENOM" id="CLU_014330_3_2_11"/>
<dbReference type="OrthoDB" id="9802326at2"/>
<dbReference type="Proteomes" id="UP000000806">
    <property type="component" value="Chromosome"/>
</dbReference>
<dbReference type="GO" id="GO:0005737">
    <property type="term" value="C:cytoplasm"/>
    <property type="evidence" value="ECO:0007669"/>
    <property type="project" value="UniProtKB-SubCell"/>
</dbReference>
<dbReference type="GO" id="GO:0004815">
    <property type="term" value="F:aspartate-tRNA ligase activity"/>
    <property type="evidence" value="ECO:0007669"/>
    <property type="project" value="UniProtKB-UniRule"/>
</dbReference>
<dbReference type="GO" id="GO:0050560">
    <property type="term" value="F:aspartate-tRNA(Asn) ligase activity"/>
    <property type="evidence" value="ECO:0007669"/>
    <property type="project" value="UniProtKB-EC"/>
</dbReference>
<dbReference type="GO" id="GO:0005524">
    <property type="term" value="F:ATP binding"/>
    <property type="evidence" value="ECO:0007669"/>
    <property type="project" value="UniProtKB-UniRule"/>
</dbReference>
<dbReference type="GO" id="GO:0003676">
    <property type="term" value="F:nucleic acid binding"/>
    <property type="evidence" value="ECO:0007669"/>
    <property type="project" value="InterPro"/>
</dbReference>
<dbReference type="GO" id="GO:0006422">
    <property type="term" value="P:aspartyl-tRNA aminoacylation"/>
    <property type="evidence" value="ECO:0007669"/>
    <property type="project" value="UniProtKB-UniRule"/>
</dbReference>
<dbReference type="CDD" id="cd00777">
    <property type="entry name" value="AspRS_core"/>
    <property type="match status" value="1"/>
</dbReference>
<dbReference type="CDD" id="cd04317">
    <property type="entry name" value="EcAspRS_like_N"/>
    <property type="match status" value="1"/>
</dbReference>
<dbReference type="Gene3D" id="3.30.930.10">
    <property type="entry name" value="Bira Bifunctional Protein, Domain 2"/>
    <property type="match status" value="1"/>
</dbReference>
<dbReference type="Gene3D" id="3.30.1360.30">
    <property type="entry name" value="GAD-like domain"/>
    <property type="match status" value="1"/>
</dbReference>
<dbReference type="Gene3D" id="2.40.50.140">
    <property type="entry name" value="Nucleic acid-binding proteins"/>
    <property type="match status" value="1"/>
</dbReference>
<dbReference type="HAMAP" id="MF_00044">
    <property type="entry name" value="Asp_tRNA_synth_type1"/>
    <property type="match status" value="1"/>
</dbReference>
<dbReference type="InterPro" id="IPR004364">
    <property type="entry name" value="Aa-tRNA-synt_II"/>
</dbReference>
<dbReference type="InterPro" id="IPR006195">
    <property type="entry name" value="aa-tRNA-synth_II"/>
</dbReference>
<dbReference type="InterPro" id="IPR045864">
    <property type="entry name" value="aa-tRNA-synth_II/BPL/LPL"/>
</dbReference>
<dbReference type="InterPro" id="IPR004524">
    <property type="entry name" value="Asp-tRNA-ligase_1"/>
</dbReference>
<dbReference type="InterPro" id="IPR047089">
    <property type="entry name" value="Asp-tRNA-ligase_1_N"/>
</dbReference>
<dbReference type="InterPro" id="IPR002312">
    <property type="entry name" value="Asp/Asn-tRNA-synth_IIb"/>
</dbReference>
<dbReference type="InterPro" id="IPR047090">
    <property type="entry name" value="AspRS_core"/>
</dbReference>
<dbReference type="InterPro" id="IPR004115">
    <property type="entry name" value="GAD-like_sf"/>
</dbReference>
<dbReference type="InterPro" id="IPR029351">
    <property type="entry name" value="GAD_dom"/>
</dbReference>
<dbReference type="InterPro" id="IPR012340">
    <property type="entry name" value="NA-bd_OB-fold"/>
</dbReference>
<dbReference type="InterPro" id="IPR004365">
    <property type="entry name" value="NA-bd_OB_tRNA"/>
</dbReference>
<dbReference type="NCBIfam" id="TIGR00459">
    <property type="entry name" value="aspS_bact"/>
    <property type="match status" value="1"/>
</dbReference>
<dbReference type="NCBIfam" id="NF001750">
    <property type="entry name" value="PRK00476.1"/>
    <property type="match status" value="1"/>
</dbReference>
<dbReference type="PANTHER" id="PTHR22594:SF5">
    <property type="entry name" value="ASPARTATE--TRNA LIGASE, MITOCHONDRIAL"/>
    <property type="match status" value="1"/>
</dbReference>
<dbReference type="PANTHER" id="PTHR22594">
    <property type="entry name" value="ASPARTYL/LYSYL-TRNA SYNTHETASE"/>
    <property type="match status" value="1"/>
</dbReference>
<dbReference type="Pfam" id="PF02938">
    <property type="entry name" value="GAD"/>
    <property type="match status" value="1"/>
</dbReference>
<dbReference type="Pfam" id="PF00152">
    <property type="entry name" value="tRNA-synt_2"/>
    <property type="match status" value="1"/>
</dbReference>
<dbReference type="Pfam" id="PF01336">
    <property type="entry name" value="tRNA_anti-codon"/>
    <property type="match status" value="1"/>
</dbReference>
<dbReference type="PRINTS" id="PR01042">
    <property type="entry name" value="TRNASYNTHASP"/>
</dbReference>
<dbReference type="SUPFAM" id="SSF55681">
    <property type="entry name" value="Class II aaRS and biotin synthetases"/>
    <property type="match status" value="1"/>
</dbReference>
<dbReference type="SUPFAM" id="SSF55261">
    <property type="entry name" value="GAD domain-like"/>
    <property type="match status" value="1"/>
</dbReference>
<dbReference type="SUPFAM" id="SSF50249">
    <property type="entry name" value="Nucleic acid-binding proteins"/>
    <property type="match status" value="1"/>
</dbReference>
<dbReference type="PROSITE" id="PS50862">
    <property type="entry name" value="AA_TRNA_LIGASE_II"/>
    <property type="match status" value="1"/>
</dbReference>
<organism>
    <name type="scientific">Mycobacterium leprae (strain TN)</name>
    <dbReference type="NCBI Taxonomy" id="272631"/>
    <lineage>
        <taxon>Bacteria</taxon>
        <taxon>Bacillati</taxon>
        <taxon>Actinomycetota</taxon>
        <taxon>Actinomycetes</taxon>
        <taxon>Mycobacteriales</taxon>
        <taxon>Mycobacteriaceae</taxon>
        <taxon>Mycobacterium</taxon>
    </lineage>
</organism>
<comment type="function">
    <text evidence="1">Aspartyl-tRNA synthetase with relaxed tRNA specificity since it is able to aspartylate not only its cognate tRNA(Asp) but also tRNA(Asn). Reaction proceeds in two steps: L-aspartate is first activated by ATP to form Asp-AMP and then transferred to the acceptor end of tRNA(Asp/Asn).</text>
</comment>
<comment type="catalytic activity">
    <reaction evidence="1">
        <text>tRNA(Asx) + L-aspartate + ATP = L-aspartyl-tRNA(Asx) + AMP + diphosphate</text>
        <dbReference type="Rhea" id="RHEA:18349"/>
        <dbReference type="Rhea" id="RHEA-COMP:9710"/>
        <dbReference type="Rhea" id="RHEA-COMP:9711"/>
        <dbReference type="ChEBI" id="CHEBI:29991"/>
        <dbReference type="ChEBI" id="CHEBI:30616"/>
        <dbReference type="ChEBI" id="CHEBI:33019"/>
        <dbReference type="ChEBI" id="CHEBI:78442"/>
        <dbReference type="ChEBI" id="CHEBI:78516"/>
        <dbReference type="ChEBI" id="CHEBI:456215"/>
        <dbReference type="EC" id="6.1.1.23"/>
    </reaction>
</comment>
<comment type="subunit">
    <text evidence="1">Homodimer.</text>
</comment>
<comment type="subcellular location">
    <subcellularLocation>
        <location evidence="1">Cytoplasm</location>
    </subcellularLocation>
</comment>
<comment type="similarity">
    <text evidence="1">Belongs to the class-II aminoacyl-tRNA synthetase family. Type 1 subfamily.</text>
</comment>
<reference key="1">
    <citation type="journal article" date="1995" name="Infect. Immun.">
        <title>Molecular characterization and T-cell-stimulatory capacity of Mycobacterium leprae antigen T5.</title>
        <authorList>
            <person name="Wieles B."/>
            <person name="Spierings E."/>
            <person name="van Noort J."/>
            <person name="Naafs B."/>
            <person name="Offringa R."/>
            <person name="Ottenhoff T."/>
        </authorList>
    </citation>
    <scope>NUCLEOTIDE SEQUENCE [GENOMIC DNA]</scope>
</reference>
<reference key="2">
    <citation type="journal article" date="2001" name="Nature">
        <title>Massive gene decay in the leprosy bacillus.</title>
        <authorList>
            <person name="Cole S.T."/>
            <person name="Eiglmeier K."/>
            <person name="Parkhill J."/>
            <person name="James K.D."/>
            <person name="Thomson N.R."/>
            <person name="Wheeler P.R."/>
            <person name="Honore N."/>
            <person name="Garnier T."/>
            <person name="Churcher C.M."/>
            <person name="Harris D.E."/>
            <person name="Mungall K.L."/>
            <person name="Basham D."/>
            <person name="Brown D."/>
            <person name="Chillingworth T."/>
            <person name="Connor R."/>
            <person name="Davies R.M."/>
            <person name="Devlin K."/>
            <person name="Duthoy S."/>
            <person name="Feltwell T."/>
            <person name="Fraser A."/>
            <person name="Hamlin N."/>
            <person name="Holroyd S."/>
            <person name="Hornsby T."/>
            <person name="Jagels K."/>
            <person name="Lacroix C."/>
            <person name="Maclean J."/>
            <person name="Moule S."/>
            <person name="Murphy L.D."/>
            <person name="Oliver K."/>
            <person name="Quail M.A."/>
            <person name="Rajandream M.A."/>
            <person name="Rutherford K.M."/>
            <person name="Rutter S."/>
            <person name="Seeger K."/>
            <person name="Simon S."/>
            <person name="Simmonds M."/>
            <person name="Skelton J."/>
            <person name="Squares R."/>
            <person name="Squares S."/>
            <person name="Stevens K."/>
            <person name="Taylor K."/>
            <person name="Whitehead S."/>
            <person name="Woodward J.R."/>
            <person name="Barrell B.G."/>
        </authorList>
    </citation>
    <scope>NUCLEOTIDE SEQUENCE [LARGE SCALE GENOMIC DNA]</scope>
    <source>
        <strain>TN</strain>
    </source>
</reference>
<feature type="chain" id="PRO_0000110903" description="Aspartate--tRNA(Asp/Asn) ligase">
    <location>
        <begin position="1"/>
        <end position="589"/>
    </location>
</feature>
<feature type="region of interest" description="Aspartate" evidence="1">
    <location>
        <begin position="194"/>
        <end position="197"/>
    </location>
</feature>
<feature type="region of interest" description="Disordered" evidence="2">
    <location>
        <begin position="563"/>
        <end position="589"/>
    </location>
</feature>
<feature type="compositionally biased region" description="Basic and acidic residues" evidence="2">
    <location>
        <begin position="575"/>
        <end position="589"/>
    </location>
</feature>
<feature type="binding site" evidence="1">
    <location>
        <position position="170"/>
    </location>
    <ligand>
        <name>L-aspartate</name>
        <dbReference type="ChEBI" id="CHEBI:29991"/>
    </ligand>
</feature>
<feature type="binding site" evidence="1">
    <location>
        <begin position="216"/>
        <end position="218"/>
    </location>
    <ligand>
        <name>ATP</name>
        <dbReference type="ChEBI" id="CHEBI:30616"/>
    </ligand>
</feature>
<feature type="binding site" evidence="1">
    <location>
        <position position="216"/>
    </location>
    <ligand>
        <name>L-aspartate</name>
        <dbReference type="ChEBI" id="CHEBI:29991"/>
    </ligand>
</feature>
<feature type="binding site" evidence="1">
    <location>
        <position position="225"/>
    </location>
    <ligand>
        <name>ATP</name>
        <dbReference type="ChEBI" id="CHEBI:30616"/>
    </ligand>
</feature>
<feature type="binding site" evidence="1">
    <location>
        <position position="448"/>
    </location>
    <ligand>
        <name>L-aspartate</name>
        <dbReference type="ChEBI" id="CHEBI:29991"/>
    </ligand>
</feature>
<feature type="binding site" evidence="1">
    <location>
        <position position="482"/>
    </location>
    <ligand>
        <name>ATP</name>
        <dbReference type="ChEBI" id="CHEBI:30616"/>
    </ligand>
</feature>
<feature type="binding site" evidence="1">
    <location>
        <position position="489"/>
    </location>
    <ligand>
        <name>L-aspartate</name>
        <dbReference type="ChEBI" id="CHEBI:29991"/>
    </ligand>
</feature>
<feature type="binding site" evidence="1">
    <location>
        <begin position="534"/>
        <end position="537"/>
    </location>
    <ligand>
        <name>ATP</name>
        <dbReference type="ChEBI" id="CHEBI:30616"/>
    </ligand>
</feature>
<feature type="site" description="Important for tRNA non-discrimination" evidence="1">
    <location>
        <position position="31"/>
    </location>
</feature>
<feature type="site" description="Important for tRNA non-discrimination" evidence="1">
    <location>
        <position position="80"/>
    </location>
</feature>
<keyword id="KW-0030">Aminoacyl-tRNA synthetase</keyword>
<keyword id="KW-0067">ATP-binding</keyword>
<keyword id="KW-0963">Cytoplasm</keyword>
<keyword id="KW-0436">Ligase</keyword>
<keyword id="KW-0547">Nucleotide-binding</keyword>
<keyword id="KW-0648">Protein biosynthesis</keyword>
<keyword id="KW-1185">Reference proteome</keyword>